<comment type="function">
    <text evidence="3">Isoform mocs1a and isoform mocs1b probably form a complex that catalyzes the conversion of 5'-GTP to cyclic pyranopterin monophosphate (cPMP). mocs1a catalyzes the cyclization of GTP to (8S)-3',8-cyclo-7,8-dihydroguanosine 5'-triphosphate and mocs1b catalyzes the subsequent conversion of (8S)-3',8-cyclo-7,8-dihydroguanosine 5'-triphosphate to cPMP.</text>
</comment>
<comment type="catalytic activity">
    <reaction evidence="2">
        <text>GTP + AH2 + S-adenosyl-L-methionine = (8S)-3',8-cyclo-7,8-dihydroguanosine 5'-triphosphate + 5'-deoxyadenosine + L-methionine + A + H(+)</text>
        <dbReference type="Rhea" id="RHEA:49576"/>
        <dbReference type="ChEBI" id="CHEBI:13193"/>
        <dbReference type="ChEBI" id="CHEBI:15378"/>
        <dbReference type="ChEBI" id="CHEBI:17319"/>
        <dbReference type="ChEBI" id="CHEBI:17499"/>
        <dbReference type="ChEBI" id="CHEBI:37565"/>
        <dbReference type="ChEBI" id="CHEBI:57844"/>
        <dbReference type="ChEBI" id="CHEBI:59789"/>
        <dbReference type="ChEBI" id="CHEBI:131766"/>
        <dbReference type="EC" id="4.1.99.22"/>
    </reaction>
</comment>
<comment type="catalytic activity">
    <reaction evidence="3">
        <text>(8S)-3',8-cyclo-7,8-dihydroguanosine 5'-triphosphate = cyclic pyranopterin phosphate + diphosphate</text>
        <dbReference type="Rhea" id="RHEA:49580"/>
        <dbReference type="ChEBI" id="CHEBI:33019"/>
        <dbReference type="ChEBI" id="CHEBI:59648"/>
        <dbReference type="ChEBI" id="CHEBI:131766"/>
        <dbReference type="EC" id="4.6.1.17"/>
    </reaction>
</comment>
<comment type="cofactor">
    <cofactor evidence="3">
        <name>[4Fe-4S] cluster</name>
        <dbReference type="ChEBI" id="CHEBI:49883"/>
    </cofactor>
    <text evidence="3">Binds 2 [4Fe-4S] clusters. Binds 1 [4Fe-4S] cluster coordinated with 3 cysteines and an exchangeable S-adenosyl-L-methionine and 1 [4Fe-4S] cluster coordinated with 3 cysteines and the GTP-derived substrate.</text>
</comment>
<comment type="pathway">
    <text>Cofactor biosynthesis; molybdopterin biosynthesis.</text>
</comment>
<comment type="subunit">
    <text evidence="3">Isoform mocs1a and isoform mocs1b probably form a heterooligomer.</text>
</comment>
<comment type="alternative products">
    <event type="alternative splicing"/>
    <isoform>
        <id>Q54NM6-1</id>
        <name>mocs1b</name>
        <sequence type="displayed"/>
    </isoform>
    <isoform>
        <id>Q54NM6-2</id>
        <name>mocs1a</name>
        <sequence type="described" ref="VSP_036828 VSP_036829"/>
    </isoform>
</comment>
<comment type="similarity">
    <text evidence="6">In the C-terminal section; belongs to the MoaC family.</text>
</comment>
<comment type="similarity">
    <text evidence="6">In the N-terminal section; belongs to the radical SAM superfamily. MoaA family.</text>
</comment>
<comment type="caution">
    <text evidence="3">The C-terminus of mocs1a was previously believed to be thiocarboxylated, but it is now known not to be the case.</text>
</comment>
<dbReference type="EC" id="4.1.99.22" evidence="2"/>
<dbReference type="EC" id="4.6.1.17" evidence="3"/>
<dbReference type="EMBL" id="AAFI02000074">
    <property type="protein sequence ID" value="EAL64881.1"/>
    <property type="molecule type" value="Genomic_DNA"/>
</dbReference>
<dbReference type="RefSeq" id="XP_639890.1">
    <property type="nucleotide sequence ID" value="XM_634798.1"/>
</dbReference>
<dbReference type="SMR" id="Q54NM6"/>
<dbReference type="FunCoup" id="Q54NM6">
    <property type="interactions" value="157"/>
</dbReference>
<dbReference type="STRING" id="44689.Q54NM6"/>
<dbReference type="PaxDb" id="44689-DDB0267168"/>
<dbReference type="EnsemblProtists" id="EAL64881">
    <property type="protein sequence ID" value="EAL64881"/>
    <property type="gene ID" value="DDB_G0285137"/>
</dbReference>
<dbReference type="GeneID" id="8624961"/>
<dbReference type="KEGG" id="ddi:DDB_G0285137"/>
<dbReference type="dictyBase" id="DDB_G0285137">
    <property type="gene designation" value="mocs1"/>
</dbReference>
<dbReference type="VEuPathDB" id="AmoebaDB:DDB_G0285137"/>
<dbReference type="eggNOG" id="KOG2876">
    <property type="taxonomic scope" value="Eukaryota"/>
</dbReference>
<dbReference type="HOGENOM" id="CLU_009273_7_1_1"/>
<dbReference type="InParanoid" id="Q54NM6"/>
<dbReference type="OMA" id="QTVHMTS"/>
<dbReference type="PhylomeDB" id="Q54NM6"/>
<dbReference type="Reactome" id="R-DDI-947581">
    <property type="pathway name" value="Molybdenum cofactor biosynthesis"/>
</dbReference>
<dbReference type="UniPathway" id="UPA00344"/>
<dbReference type="PRO" id="PR:Q54NM6"/>
<dbReference type="Proteomes" id="UP000002195">
    <property type="component" value="Chromosome 4"/>
</dbReference>
<dbReference type="GO" id="GO:0051539">
    <property type="term" value="F:4 iron, 4 sulfur cluster binding"/>
    <property type="evidence" value="ECO:0007669"/>
    <property type="project" value="UniProtKB-KW"/>
</dbReference>
<dbReference type="GO" id="GO:0061799">
    <property type="term" value="F:cyclic pyranopterin monophosphate synthase activity"/>
    <property type="evidence" value="ECO:0000318"/>
    <property type="project" value="GO_Central"/>
</dbReference>
<dbReference type="GO" id="GO:0061798">
    <property type="term" value="F:GTP 3',8'-cyclase activity"/>
    <property type="evidence" value="ECO:0000318"/>
    <property type="project" value="GO_Central"/>
</dbReference>
<dbReference type="GO" id="GO:0005525">
    <property type="term" value="F:GTP binding"/>
    <property type="evidence" value="ECO:0007669"/>
    <property type="project" value="UniProtKB-KW"/>
</dbReference>
<dbReference type="GO" id="GO:0046872">
    <property type="term" value="F:metal ion binding"/>
    <property type="evidence" value="ECO:0007669"/>
    <property type="project" value="UniProtKB-KW"/>
</dbReference>
<dbReference type="GO" id="GO:0006777">
    <property type="term" value="P:Mo-molybdopterin cofactor biosynthetic process"/>
    <property type="evidence" value="ECO:0000250"/>
    <property type="project" value="UniProtKB"/>
</dbReference>
<dbReference type="CDD" id="cd01420">
    <property type="entry name" value="MoaC_PE"/>
    <property type="match status" value="1"/>
</dbReference>
<dbReference type="CDD" id="cd01335">
    <property type="entry name" value="Radical_SAM"/>
    <property type="match status" value="1"/>
</dbReference>
<dbReference type="CDD" id="cd21117">
    <property type="entry name" value="Twitch_MoaA"/>
    <property type="match status" value="1"/>
</dbReference>
<dbReference type="FunFam" id="3.20.20.70:FF:000117">
    <property type="entry name" value="molybdenum cofactor biosynthesis protein 1"/>
    <property type="match status" value="1"/>
</dbReference>
<dbReference type="Gene3D" id="3.20.20.70">
    <property type="entry name" value="Aldolase class I"/>
    <property type="match status" value="1"/>
</dbReference>
<dbReference type="Gene3D" id="3.30.70.640">
    <property type="entry name" value="Molybdopterin cofactor biosynthesis C (MoaC) domain"/>
    <property type="match status" value="1"/>
</dbReference>
<dbReference type="HAMAP" id="MF_01225_B">
    <property type="entry name" value="MoaA_B"/>
    <property type="match status" value="1"/>
</dbReference>
<dbReference type="InterPro" id="IPR013785">
    <property type="entry name" value="Aldolase_TIM"/>
</dbReference>
<dbReference type="InterPro" id="IPR006638">
    <property type="entry name" value="Elp3/MiaA/NifB-like_rSAM"/>
</dbReference>
<dbReference type="InterPro" id="IPR013483">
    <property type="entry name" value="MoaA"/>
</dbReference>
<dbReference type="InterPro" id="IPR000385">
    <property type="entry name" value="MoaA_NifB_PqqE_Fe-S-bd_CS"/>
</dbReference>
<dbReference type="InterPro" id="IPR010505">
    <property type="entry name" value="MoaA_twitch"/>
</dbReference>
<dbReference type="InterPro" id="IPR047594">
    <property type="entry name" value="MoaC_bact/euk"/>
</dbReference>
<dbReference type="InterPro" id="IPR036522">
    <property type="entry name" value="MoaC_sf"/>
</dbReference>
<dbReference type="InterPro" id="IPR050105">
    <property type="entry name" value="MoCo_biosynth_MoaA/MoaC"/>
</dbReference>
<dbReference type="InterPro" id="IPR002820">
    <property type="entry name" value="Mopterin_CF_biosynth-C_dom"/>
</dbReference>
<dbReference type="InterPro" id="IPR007197">
    <property type="entry name" value="rSAM"/>
</dbReference>
<dbReference type="NCBIfam" id="TIGR02666">
    <property type="entry name" value="moaA"/>
    <property type="match status" value="1"/>
</dbReference>
<dbReference type="PANTHER" id="PTHR22960:SF0">
    <property type="entry name" value="MOLYBDENUM COFACTOR BIOSYNTHESIS PROTEIN 1"/>
    <property type="match status" value="1"/>
</dbReference>
<dbReference type="PANTHER" id="PTHR22960">
    <property type="entry name" value="MOLYBDOPTERIN COFACTOR SYNTHESIS PROTEIN A"/>
    <property type="match status" value="1"/>
</dbReference>
<dbReference type="Pfam" id="PF13353">
    <property type="entry name" value="Fer4_12"/>
    <property type="match status" value="1"/>
</dbReference>
<dbReference type="Pfam" id="PF01967">
    <property type="entry name" value="MoaC"/>
    <property type="match status" value="1"/>
</dbReference>
<dbReference type="Pfam" id="PF06463">
    <property type="entry name" value="Mob_synth_C"/>
    <property type="match status" value="1"/>
</dbReference>
<dbReference type="Pfam" id="PF04055">
    <property type="entry name" value="Radical_SAM"/>
    <property type="match status" value="1"/>
</dbReference>
<dbReference type="SFLD" id="SFLDG01383">
    <property type="entry name" value="cyclic_pyranopterin_phosphate"/>
    <property type="match status" value="1"/>
</dbReference>
<dbReference type="SFLD" id="SFLDG01386">
    <property type="entry name" value="main_SPASM_domain-containing"/>
    <property type="match status" value="1"/>
</dbReference>
<dbReference type="SMART" id="SM00729">
    <property type="entry name" value="Elp3"/>
    <property type="match status" value="1"/>
</dbReference>
<dbReference type="SUPFAM" id="SSF55040">
    <property type="entry name" value="Molybdenum cofactor biosynthesis protein C, MoaC"/>
    <property type="match status" value="1"/>
</dbReference>
<dbReference type="SUPFAM" id="SSF102114">
    <property type="entry name" value="Radical SAM enzymes"/>
    <property type="match status" value="1"/>
</dbReference>
<dbReference type="PROSITE" id="PS01305">
    <property type="entry name" value="MOAA_NIFB_PQQE"/>
    <property type="match status" value="1"/>
</dbReference>
<dbReference type="PROSITE" id="PS51918">
    <property type="entry name" value="RADICAL_SAM"/>
    <property type="match status" value="1"/>
</dbReference>
<keyword id="KW-0004">4Fe-4S</keyword>
<keyword id="KW-0025">Alternative splicing</keyword>
<keyword id="KW-0342">GTP-binding</keyword>
<keyword id="KW-0408">Iron</keyword>
<keyword id="KW-0411">Iron-sulfur</keyword>
<keyword id="KW-0456">Lyase</keyword>
<keyword id="KW-0479">Metal-binding</keyword>
<keyword id="KW-0501">Molybdenum cofactor biosynthesis</keyword>
<keyword id="KW-0547">Nucleotide-binding</keyword>
<keyword id="KW-1185">Reference proteome</keyword>
<keyword id="KW-0949">S-adenosyl-L-methionine</keyword>
<feature type="chain" id="PRO_0000331260" description="Molybdenum cofactor biosynthesis protein 1">
    <location>
        <begin position="1"/>
        <end position="630"/>
    </location>
</feature>
<feature type="domain" description="Radical SAM core" evidence="5">
    <location>
        <begin position="61"/>
        <end position="298"/>
    </location>
</feature>
<feature type="region of interest" description="Molybdenum cofactor biosynthesis protein C">
    <location>
        <begin position="402"/>
        <end position="629"/>
    </location>
</feature>
<feature type="active site" description="For molybdenum cofactor biosynthesis protein C activity" evidence="4">
    <location>
        <position position="599"/>
    </location>
</feature>
<feature type="binding site" evidence="1">
    <location>
        <position position="70"/>
    </location>
    <ligand>
        <name>GTP</name>
        <dbReference type="ChEBI" id="CHEBI:37565"/>
    </ligand>
</feature>
<feature type="binding site" evidence="1">
    <location>
        <position position="77"/>
    </location>
    <ligand>
        <name>[4Fe-4S] cluster</name>
        <dbReference type="ChEBI" id="CHEBI:49883"/>
        <label>1</label>
        <note>4Fe-4S-S-AdoMet</note>
    </ligand>
</feature>
<feature type="binding site" evidence="1">
    <location>
        <position position="81"/>
    </location>
    <ligand>
        <name>[4Fe-4S] cluster</name>
        <dbReference type="ChEBI" id="CHEBI:49883"/>
        <label>1</label>
        <note>4Fe-4S-S-AdoMet</note>
    </ligand>
</feature>
<feature type="binding site" evidence="1">
    <location>
        <position position="83"/>
    </location>
    <ligand>
        <name>S-adenosyl-L-methionine</name>
        <dbReference type="ChEBI" id="CHEBI:59789"/>
    </ligand>
</feature>
<feature type="binding site" evidence="1">
    <location>
        <position position="84"/>
    </location>
    <ligand>
        <name>[4Fe-4S] cluster</name>
        <dbReference type="ChEBI" id="CHEBI:49883"/>
        <label>1</label>
        <note>4Fe-4S-S-AdoMet</note>
    </ligand>
</feature>
<feature type="binding site" evidence="1">
    <location>
        <position position="120"/>
    </location>
    <ligand>
        <name>GTP</name>
        <dbReference type="ChEBI" id="CHEBI:37565"/>
    </ligand>
</feature>
<feature type="binding site" evidence="1">
    <location>
        <position position="124"/>
    </location>
    <ligand>
        <name>S-adenosyl-L-methionine</name>
        <dbReference type="ChEBI" id="CHEBI:59789"/>
    </ligand>
</feature>
<feature type="binding site" evidence="1">
    <location>
        <position position="151"/>
    </location>
    <ligand>
        <name>GTP</name>
        <dbReference type="ChEBI" id="CHEBI:37565"/>
    </ligand>
</feature>
<feature type="binding site" evidence="1">
    <location>
        <position position="175"/>
    </location>
    <ligand>
        <name>S-adenosyl-L-methionine</name>
        <dbReference type="ChEBI" id="CHEBI:59789"/>
    </ligand>
</feature>
<feature type="binding site" evidence="1">
    <location>
        <position position="212"/>
    </location>
    <ligand>
        <name>GTP</name>
        <dbReference type="ChEBI" id="CHEBI:37565"/>
    </ligand>
</feature>
<feature type="binding site" evidence="1">
    <location>
        <position position="246"/>
    </location>
    <ligand>
        <name>S-adenosyl-L-methionine</name>
        <dbReference type="ChEBI" id="CHEBI:59789"/>
    </ligand>
</feature>
<feature type="binding site" evidence="1">
    <location>
        <position position="312"/>
    </location>
    <ligand>
        <name>[4Fe-4S] cluster</name>
        <dbReference type="ChEBI" id="CHEBI:49883"/>
        <label>2</label>
        <note>4Fe-4S-substrate</note>
    </ligand>
</feature>
<feature type="binding site" evidence="1">
    <location>
        <position position="315"/>
    </location>
    <ligand>
        <name>[4Fe-4S] cluster</name>
        <dbReference type="ChEBI" id="CHEBI:49883"/>
        <label>2</label>
        <note>4Fe-4S-substrate</note>
    </ligand>
</feature>
<feature type="binding site" evidence="1">
    <location>
        <begin position="317"/>
        <end position="319"/>
    </location>
    <ligand>
        <name>GTP</name>
        <dbReference type="ChEBI" id="CHEBI:37565"/>
    </ligand>
</feature>
<feature type="binding site" evidence="1">
    <location>
        <position position="329"/>
    </location>
    <ligand>
        <name>[4Fe-4S] cluster</name>
        <dbReference type="ChEBI" id="CHEBI:49883"/>
        <label>2</label>
        <note>4Fe-4S-substrate</note>
    </ligand>
</feature>
<feature type="splice variant" id="VSP_036828" description="In isoform mocs1a." evidence="6">
    <original>GE</original>
    <variation>GG</variation>
    <location>
        <begin position="384"/>
        <end position="385"/>
    </location>
</feature>
<feature type="splice variant" id="VSP_036829" description="In isoform mocs1a." evidence="6">
    <location>
        <begin position="386"/>
        <end position="630"/>
    </location>
</feature>
<evidence type="ECO:0000250" key="1"/>
<evidence type="ECO:0000250" key="2">
    <source>
        <dbReference type="UniProtKB" id="P69848"/>
    </source>
</evidence>
<evidence type="ECO:0000250" key="3">
    <source>
        <dbReference type="UniProtKB" id="Q9NZB8"/>
    </source>
</evidence>
<evidence type="ECO:0000255" key="4"/>
<evidence type="ECO:0000255" key="5">
    <source>
        <dbReference type="PROSITE-ProRule" id="PRU01266"/>
    </source>
</evidence>
<evidence type="ECO:0000305" key="6"/>
<protein>
    <recommendedName>
        <fullName>Molybdenum cofactor biosynthesis protein 1</fullName>
    </recommendedName>
    <domain>
        <recommendedName>
            <fullName>GTP 3',8-cyclase</fullName>
            <ecNumber evidence="2">4.1.99.22</ecNumber>
        </recommendedName>
        <alternativeName>
            <fullName>Molybdenum cofactor biosynthesis protein A</fullName>
        </alternativeName>
    </domain>
    <domain>
        <recommendedName>
            <fullName>Cyclic pyranopterin monophosphate synthase</fullName>
            <ecNumber evidence="3">4.6.1.17</ecNumber>
        </recommendedName>
        <alternativeName>
            <fullName>Molybdenum cofactor biosynthesis protein C</fullName>
        </alternativeName>
    </domain>
</protein>
<proteinExistence type="inferred from homology"/>
<name>MOCS1_DICDI</name>
<reference key="1">
    <citation type="journal article" date="2005" name="Nature">
        <title>The genome of the social amoeba Dictyostelium discoideum.</title>
        <authorList>
            <person name="Eichinger L."/>
            <person name="Pachebat J.A."/>
            <person name="Gloeckner G."/>
            <person name="Rajandream M.A."/>
            <person name="Sucgang R."/>
            <person name="Berriman M."/>
            <person name="Song J."/>
            <person name="Olsen R."/>
            <person name="Szafranski K."/>
            <person name="Xu Q."/>
            <person name="Tunggal B."/>
            <person name="Kummerfeld S."/>
            <person name="Madera M."/>
            <person name="Konfortov B.A."/>
            <person name="Rivero F."/>
            <person name="Bankier A.T."/>
            <person name="Lehmann R."/>
            <person name="Hamlin N."/>
            <person name="Davies R."/>
            <person name="Gaudet P."/>
            <person name="Fey P."/>
            <person name="Pilcher K."/>
            <person name="Chen G."/>
            <person name="Saunders D."/>
            <person name="Sodergren E.J."/>
            <person name="Davis P."/>
            <person name="Kerhornou A."/>
            <person name="Nie X."/>
            <person name="Hall N."/>
            <person name="Anjard C."/>
            <person name="Hemphill L."/>
            <person name="Bason N."/>
            <person name="Farbrother P."/>
            <person name="Desany B."/>
            <person name="Just E."/>
            <person name="Morio T."/>
            <person name="Rost R."/>
            <person name="Churcher C.M."/>
            <person name="Cooper J."/>
            <person name="Haydock S."/>
            <person name="van Driessche N."/>
            <person name="Cronin A."/>
            <person name="Goodhead I."/>
            <person name="Muzny D.M."/>
            <person name="Mourier T."/>
            <person name="Pain A."/>
            <person name="Lu M."/>
            <person name="Harper D."/>
            <person name="Lindsay R."/>
            <person name="Hauser H."/>
            <person name="James K.D."/>
            <person name="Quiles M."/>
            <person name="Madan Babu M."/>
            <person name="Saito T."/>
            <person name="Buchrieser C."/>
            <person name="Wardroper A."/>
            <person name="Felder M."/>
            <person name="Thangavelu M."/>
            <person name="Johnson D."/>
            <person name="Knights A."/>
            <person name="Loulseged H."/>
            <person name="Mungall K.L."/>
            <person name="Oliver K."/>
            <person name="Price C."/>
            <person name="Quail M.A."/>
            <person name="Urushihara H."/>
            <person name="Hernandez J."/>
            <person name="Rabbinowitsch E."/>
            <person name="Steffen D."/>
            <person name="Sanders M."/>
            <person name="Ma J."/>
            <person name="Kohara Y."/>
            <person name="Sharp S."/>
            <person name="Simmonds M.N."/>
            <person name="Spiegler S."/>
            <person name="Tivey A."/>
            <person name="Sugano S."/>
            <person name="White B."/>
            <person name="Walker D."/>
            <person name="Woodward J.R."/>
            <person name="Winckler T."/>
            <person name="Tanaka Y."/>
            <person name="Shaulsky G."/>
            <person name="Schleicher M."/>
            <person name="Weinstock G.M."/>
            <person name="Rosenthal A."/>
            <person name="Cox E.C."/>
            <person name="Chisholm R.L."/>
            <person name="Gibbs R.A."/>
            <person name="Loomis W.F."/>
            <person name="Platzer M."/>
            <person name="Kay R.R."/>
            <person name="Williams J.G."/>
            <person name="Dear P.H."/>
            <person name="Noegel A.A."/>
            <person name="Barrell B.G."/>
            <person name="Kuspa A."/>
        </authorList>
    </citation>
    <scope>NUCLEOTIDE SEQUENCE [LARGE SCALE GENOMIC DNA]</scope>
    <source>
        <strain>AX4</strain>
    </source>
</reference>
<gene>
    <name type="primary">mocs1</name>
    <name type="ORF">DDB_G0285137</name>
</gene>
<accession>Q54NM6</accession>
<sequence length="630" mass="71582">MTNIIKSFITRNTYLNKLSPSPYQFNKYYSNSISTPPTHSYEKKQQPIQNVDDKKYILTDRFNRHHTYLRISLTERCNLRCKYCMPEEGVMLSQADKILTTDEIIRLSKLFVSAGVNKIRFTGGEPLVRKDVEPLIEEVGKIKGLQKIGITTNGILLSRKLDRLHKAGVNLLNISLDTLNSDKFTLITRRLGWDRVFQSIDNALKLDNIKVKVNCVIMKGLNDMEICDFVEMTRDKSVEIRFIEYMPFDGNLWSDKKFLSYTDMIKIIHEKYPTFKKYTIEEEEPNNTSKTYHVPGFKGKVGFITSMSEHFCSSCNRLRITADGNLKVCLFGNTEVNLRDRIRDGASDQQLLEIINAAVLKKKASHAGMYEIAQNKNRPMILIGEKSKIQINFKNKSIKQKKEVKNYLLKLINSSFINSNNNNNNNNNNNNNSKLQYIQQRNYSTNKNNQNLENNEFSHITKDGKLPTMVDISDKIITKRTAHAQSILEFPSNVLSQLLNLEKNNDIDNDNNISKNKEIVSKKGPVFATSIVAGTMAVKNTSNLIPFCHPIPIESCKIEITIIDSTSVKVDCIVSMSGKTGVEMEALTGATITSLTIYDMCKALSKDIVIKETKLISKFGGKSSSPQITK</sequence>
<organism>
    <name type="scientific">Dictyostelium discoideum</name>
    <name type="common">Social amoeba</name>
    <dbReference type="NCBI Taxonomy" id="44689"/>
    <lineage>
        <taxon>Eukaryota</taxon>
        <taxon>Amoebozoa</taxon>
        <taxon>Evosea</taxon>
        <taxon>Eumycetozoa</taxon>
        <taxon>Dictyostelia</taxon>
        <taxon>Dictyosteliales</taxon>
        <taxon>Dictyosteliaceae</taxon>
        <taxon>Dictyostelium</taxon>
    </lineage>
</organism>